<keyword id="KW-0414">Isoprene biosynthesis</keyword>
<keyword id="KW-0548">Nucleotidyltransferase</keyword>
<keyword id="KW-1185">Reference proteome</keyword>
<keyword id="KW-0808">Transferase</keyword>
<evidence type="ECO:0000255" key="1">
    <source>
        <dbReference type="HAMAP-Rule" id="MF_00108"/>
    </source>
</evidence>
<dbReference type="EC" id="2.7.7.60" evidence="1"/>
<dbReference type="EMBL" id="CT971583">
    <property type="protein sequence ID" value="CAK24284.1"/>
    <property type="molecule type" value="Genomic_DNA"/>
</dbReference>
<dbReference type="SMR" id="A5GMW9"/>
<dbReference type="STRING" id="32051.SynWH7803_1858"/>
<dbReference type="KEGG" id="syx:SynWH7803_1858"/>
<dbReference type="eggNOG" id="COG1211">
    <property type="taxonomic scope" value="Bacteria"/>
</dbReference>
<dbReference type="HOGENOM" id="CLU_061281_1_0_3"/>
<dbReference type="OrthoDB" id="9806837at2"/>
<dbReference type="UniPathway" id="UPA00056">
    <property type="reaction ID" value="UER00093"/>
</dbReference>
<dbReference type="Proteomes" id="UP000001566">
    <property type="component" value="Chromosome"/>
</dbReference>
<dbReference type="GO" id="GO:0050518">
    <property type="term" value="F:2-C-methyl-D-erythritol 4-phosphate cytidylyltransferase activity"/>
    <property type="evidence" value="ECO:0007669"/>
    <property type="project" value="UniProtKB-UniRule"/>
</dbReference>
<dbReference type="GO" id="GO:0019288">
    <property type="term" value="P:isopentenyl diphosphate biosynthetic process, methylerythritol 4-phosphate pathway"/>
    <property type="evidence" value="ECO:0007669"/>
    <property type="project" value="UniProtKB-UniRule"/>
</dbReference>
<dbReference type="CDD" id="cd02516">
    <property type="entry name" value="CDP-ME_synthetase"/>
    <property type="match status" value="1"/>
</dbReference>
<dbReference type="FunFam" id="3.90.550.10:FF:000003">
    <property type="entry name" value="2-C-methyl-D-erythritol 4-phosphate cytidylyltransferase"/>
    <property type="match status" value="1"/>
</dbReference>
<dbReference type="Gene3D" id="3.90.550.10">
    <property type="entry name" value="Spore Coat Polysaccharide Biosynthesis Protein SpsA, Chain A"/>
    <property type="match status" value="1"/>
</dbReference>
<dbReference type="HAMAP" id="MF_00108">
    <property type="entry name" value="IspD"/>
    <property type="match status" value="1"/>
</dbReference>
<dbReference type="InterPro" id="IPR001228">
    <property type="entry name" value="IspD"/>
</dbReference>
<dbReference type="InterPro" id="IPR034683">
    <property type="entry name" value="IspD/TarI"/>
</dbReference>
<dbReference type="InterPro" id="IPR050088">
    <property type="entry name" value="IspD/TarI_cytidylyltransf_bact"/>
</dbReference>
<dbReference type="InterPro" id="IPR018294">
    <property type="entry name" value="ISPD_synthase_CS"/>
</dbReference>
<dbReference type="InterPro" id="IPR029044">
    <property type="entry name" value="Nucleotide-diphossugar_trans"/>
</dbReference>
<dbReference type="NCBIfam" id="TIGR00453">
    <property type="entry name" value="ispD"/>
    <property type="match status" value="1"/>
</dbReference>
<dbReference type="PANTHER" id="PTHR32125">
    <property type="entry name" value="2-C-METHYL-D-ERYTHRITOL 4-PHOSPHATE CYTIDYLYLTRANSFERASE, CHLOROPLASTIC"/>
    <property type="match status" value="1"/>
</dbReference>
<dbReference type="PANTHER" id="PTHR32125:SF4">
    <property type="entry name" value="2-C-METHYL-D-ERYTHRITOL 4-PHOSPHATE CYTIDYLYLTRANSFERASE, CHLOROPLASTIC"/>
    <property type="match status" value="1"/>
</dbReference>
<dbReference type="Pfam" id="PF01128">
    <property type="entry name" value="IspD"/>
    <property type="match status" value="1"/>
</dbReference>
<dbReference type="SUPFAM" id="SSF53448">
    <property type="entry name" value="Nucleotide-diphospho-sugar transferases"/>
    <property type="match status" value="1"/>
</dbReference>
<dbReference type="PROSITE" id="PS01295">
    <property type="entry name" value="ISPD"/>
    <property type="match status" value="1"/>
</dbReference>
<protein>
    <recommendedName>
        <fullName evidence="1">2-C-methyl-D-erythritol 4-phosphate cytidylyltransferase</fullName>
        <ecNumber evidence="1">2.7.7.60</ecNumber>
    </recommendedName>
    <alternativeName>
        <fullName evidence="1">4-diphosphocytidyl-2C-methyl-D-erythritol synthase</fullName>
    </alternativeName>
    <alternativeName>
        <fullName evidence="1">MEP cytidylyltransferase</fullName>
        <shortName evidence="1">MCT</shortName>
    </alternativeName>
</protein>
<comment type="function">
    <text evidence="1">Catalyzes the formation of 4-diphosphocytidyl-2-C-methyl-D-erythritol from CTP and 2-C-methyl-D-erythritol 4-phosphate (MEP).</text>
</comment>
<comment type="catalytic activity">
    <reaction evidence="1">
        <text>2-C-methyl-D-erythritol 4-phosphate + CTP + H(+) = 4-CDP-2-C-methyl-D-erythritol + diphosphate</text>
        <dbReference type="Rhea" id="RHEA:13429"/>
        <dbReference type="ChEBI" id="CHEBI:15378"/>
        <dbReference type="ChEBI" id="CHEBI:33019"/>
        <dbReference type="ChEBI" id="CHEBI:37563"/>
        <dbReference type="ChEBI" id="CHEBI:57823"/>
        <dbReference type="ChEBI" id="CHEBI:58262"/>
        <dbReference type="EC" id="2.7.7.60"/>
    </reaction>
</comment>
<comment type="pathway">
    <text evidence="1">Isoprenoid biosynthesis; isopentenyl diphosphate biosynthesis via DXP pathway; isopentenyl diphosphate from 1-deoxy-D-xylulose 5-phosphate: step 2/6.</text>
</comment>
<comment type="similarity">
    <text evidence="1">Belongs to the IspD/TarI cytidylyltransferase family. IspD subfamily.</text>
</comment>
<reference key="1">
    <citation type="submission" date="2006-05" db="EMBL/GenBank/DDBJ databases">
        <authorList>
            <consortium name="Genoscope"/>
        </authorList>
    </citation>
    <scope>NUCLEOTIDE SEQUENCE [LARGE SCALE GENOMIC DNA]</scope>
    <source>
        <strain>WH7803</strain>
    </source>
</reference>
<accession>A5GMW9</accession>
<name>ISPD_SYNPW</name>
<organism>
    <name type="scientific">Synechococcus sp. (strain WH7803)</name>
    <dbReference type="NCBI Taxonomy" id="32051"/>
    <lineage>
        <taxon>Bacteria</taxon>
        <taxon>Bacillati</taxon>
        <taxon>Cyanobacteriota</taxon>
        <taxon>Cyanophyceae</taxon>
        <taxon>Synechococcales</taxon>
        <taxon>Synechococcaceae</taxon>
        <taxon>Synechococcus</taxon>
    </lineage>
</organism>
<gene>
    <name evidence="1" type="primary">ispD</name>
    <name type="ordered locus">SynWH7803_1858</name>
</gene>
<proteinExistence type="inferred from homology"/>
<feature type="chain" id="PRO_1000022953" description="2-C-methyl-D-erythritol 4-phosphate cytidylyltransferase">
    <location>
        <begin position="1"/>
        <end position="223"/>
    </location>
</feature>
<feature type="site" description="Transition state stabilizer" evidence="1">
    <location>
        <position position="13"/>
    </location>
</feature>
<feature type="site" description="Transition state stabilizer" evidence="1">
    <location>
        <position position="20"/>
    </location>
</feature>
<feature type="site" description="Positions MEP for the nucleophilic attack" evidence="1">
    <location>
        <position position="150"/>
    </location>
</feature>
<feature type="site" description="Positions MEP for the nucleophilic attack" evidence="1">
    <location>
        <position position="206"/>
    </location>
</feature>
<sequence>MHLLIAAAGSGRRMGADRNKLLLAVHGRPVLAWTLEAAGAAQSIDWIGVIGQPLDHSAMAALFHHAGQPVTWIEGGSTRQESVERGLQALPGDARHVLIHDGARCLVAPQVFNRCAEALLEGGAVIAATPVSDTIKRVDAQGVITDTPDRSELWAAQTPQGFSVSELREGHAQARARNWVVTDDASLFERLGWPVRVLDAGPGNIKVTTPFDLTVAAAVLAQR</sequence>